<proteinExistence type="inferred from homology"/>
<gene>
    <name evidence="1" type="primary">yhaM</name>
    <name type="ordered locus">EcSMS35_3406</name>
</gene>
<feature type="chain" id="PRO_0000339818" description="UPF0597 protein YhaM">
    <location>
        <begin position="1"/>
        <end position="436"/>
    </location>
</feature>
<accession>B1LFL2</accession>
<name>YHAM_ECOSM</name>
<sequence>MFDSTLNPLWQRYILAVQEEVKPALGCTEPISLALAAAVAAAELEGPVERVEAWVSPNLMKNGLGVTVPGTGMVGLPIAAALGALGGNANAGLEVLKDATAQAIADAKALLAAGKVSVKIQEPCDEILFSRAKVWNGEKWACVTIVGGHTNIVHIETHNGVVFTQQACVTEGEQESPLTVLSRTTLAEILKFVNEVPFAAIRFILDSAKLNCALSQEGLSGNWGLHIGATLEKQCARGLLAKDLSSSIVIRTSAASDARMGGATLPAMSNSGSGNQGITATMPVVVVAEHFGADDERLARALMLSHLSAIYIHNQLPRLSALCAATTAAMGAAAGMAWLVDGRYETISMAISSMIGDVSGMICDGASNSCAMKVSTSASAAWKAVLMALDDTAVTGNEGIVAHDVEQSIANLCALASHSMQQTDRQIIEIMASKAR</sequence>
<comment type="similarity">
    <text evidence="1">Belongs to the UPF0597 family.</text>
</comment>
<protein>
    <recommendedName>
        <fullName evidence="1">UPF0597 protein YhaM</fullName>
    </recommendedName>
</protein>
<evidence type="ECO:0000255" key="1">
    <source>
        <dbReference type="HAMAP-Rule" id="MF_01845"/>
    </source>
</evidence>
<reference key="1">
    <citation type="journal article" date="2008" name="J. Bacteriol.">
        <title>Insights into the environmental resistance gene pool from the genome sequence of the multidrug-resistant environmental isolate Escherichia coli SMS-3-5.</title>
        <authorList>
            <person name="Fricke W.F."/>
            <person name="Wright M.S."/>
            <person name="Lindell A.H."/>
            <person name="Harkins D.M."/>
            <person name="Baker-Austin C."/>
            <person name="Ravel J."/>
            <person name="Stepanauskas R."/>
        </authorList>
    </citation>
    <scope>NUCLEOTIDE SEQUENCE [LARGE SCALE GENOMIC DNA]</scope>
    <source>
        <strain>SMS-3-5 / SECEC</strain>
    </source>
</reference>
<dbReference type="EMBL" id="CP000970">
    <property type="protein sequence ID" value="ACB17713.1"/>
    <property type="molecule type" value="Genomic_DNA"/>
</dbReference>
<dbReference type="KEGG" id="ecm:EcSMS35_3406"/>
<dbReference type="HOGENOM" id="CLU_051840_0_0_6"/>
<dbReference type="Proteomes" id="UP000007011">
    <property type="component" value="Chromosome"/>
</dbReference>
<dbReference type="GO" id="GO:0080146">
    <property type="term" value="F:L-cysteine desulfhydrase activity"/>
    <property type="evidence" value="ECO:0007669"/>
    <property type="project" value="TreeGrafter"/>
</dbReference>
<dbReference type="GO" id="GO:0019450">
    <property type="term" value="P:L-cysteine catabolic process to pyruvate"/>
    <property type="evidence" value="ECO:0007669"/>
    <property type="project" value="TreeGrafter"/>
</dbReference>
<dbReference type="HAMAP" id="MF_01845">
    <property type="entry name" value="UPF0597"/>
    <property type="match status" value="1"/>
</dbReference>
<dbReference type="InterPro" id="IPR005130">
    <property type="entry name" value="Ser_deHydtase-like_asu"/>
</dbReference>
<dbReference type="InterPro" id="IPR021144">
    <property type="entry name" value="UPF0597"/>
</dbReference>
<dbReference type="PANTHER" id="PTHR30501">
    <property type="entry name" value="UPF0597 PROTEIN YHAM"/>
    <property type="match status" value="1"/>
</dbReference>
<dbReference type="PANTHER" id="PTHR30501:SF2">
    <property type="entry name" value="UPF0597 PROTEIN YHAM"/>
    <property type="match status" value="1"/>
</dbReference>
<dbReference type="Pfam" id="PF03313">
    <property type="entry name" value="SDH_alpha"/>
    <property type="match status" value="1"/>
</dbReference>
<dbReference type="PIRSF" id="PIRSF006054">
    <property type="entry name" value="UCP006054"/>
    <property type="match status" value="1"/>
</dbReference>
<organism>
    <name type="scientific">Escherichia coli (strain SMS-3-5 / SECEC)</name>
    <dbReference type="NCBI Taxonomy" id="439855"/>
    <lineage>
        <taxon>Bacteria</taxon>
        <taxon>Pseudomonadati</taxon>
        <taxon>Pseudomonadota</taxon>
        <taxon>Gammaproteobacteria</taxon>
        <taxon>Enterobacterales</taxon>
        <taxon>Enterobacteriaceae</taxon>
        <taxon>Escherichia</taxon>
    </lineage>
</organism>